<reference key="1">
    <citation type="journal article" date="2006" name="BMC Genomics">
        <title>Complete genome sequence of Shigella flexneri 5b and comparison with Shigella flexneri 2a.</title>
        <authorList>
            <person name="Nie H."/>
            <person name="Yang F."/>
            <person name="Zhang X."/>
            <person name="Yang J."/>
            <person name="Chen L."/>
            <person name="Wang J."/>
            <person name="Xiong Z."/>
            <person name="Peng J."/>
            <person name="Sun L."/>
            <person name="Dong J."/>
            <person name="Xue Y."/>
            <person name="Xu X."/>
            <person name="Chen S."/>
            <person name="Yao Z."/>
            <person name="Shen Y."/>
            <person name="Jin Q."/>
        </authorList>
    </citation>
    <scope>NUCLEOTIDE SEQUENCE [LARGE SCALE GENOMIC DNA]</scope>
    <source>
        <strain>8401</strain>
    </source>
</reference>
<feature type="chain" id="PRO_1000064229" description="Glycerol-3-phosphate acyltransferase">
    <location>
        <begin position="1"/>
        <end position="205"/>
    </location>
</feature>
<feature type="topological domain" description="Periplasmic" evidence="1">
    <location>
        <begin position="1"/>
        <end position="3"/>
    </location>
</feature>
<feature type="transmembrane region" description="Helical" evidence="1">
    <location>
        <begin position="4"/>
        <end position="24"/>
    </location>
</feature>
<feature type="topological domain" description="Cytoplasmic" evidence="1">
    <location>
        <begin position="25"/>
        <end position="52"/>
    </location>
</feature>
<feature type="transmembrane region" description="Helical" evidence="1">
    <location>
        <begin position="53"/>
        <end position="73"/>
    </location>
</feature>
<feature type="topological domain" description="Periplasmic" evidence="1">
    <location>
        <begin position="74"/>
        <end position="80"/>
    </location>
</feature>
<feature type="transmembrane region" description="Helical" evidence="1">
    <location>
        <begin position="81"/>
        <end position="101"/>
    </location>
</feature>
<feature type="topological domain" description="Cytoplasmic" evidence="1">
    <location>
        <begin position="102"/>
        <end position="111"/>
    </location>
</feature>
<feature type="transmembrane region" description="Helical" evidence="1">
    <location>
        <begin position="112"/>
        <end position="132"/>
    </location>
</feature>
<feature type="topological domain" description="Periplasmic" evidence="1">
    <location>
        <begin position="133"/>
        <end position="137"/>
    </location>
</feature>
<feature type="transmembrane region" description="Helical" evidence="1">
    <location>
        <begin position="138"/>
        <end position="158"/>
    </location>
</feature>
<feature type="topological domain" description="Cytoplasmic" evidence="1">
    <location>
        <begin position="159"/>
        <end position="205"/>
    </location>
</feature>
<protein>
    <recommendedName>
        <fullName evidence="1">Glycerol-3-phosphate acyltransferase</fullName>
    </recommendedName>
    <alternativeName>
        <fullName evidence="1">G3P acyltransferase</fullName>
        <shortName evidence="1">GPAT</shortName>
        <ecNumber evidence="1">2.3.1.15</ecNumber>
        <ecNumber evidence="1">2.3.1.n5</ecNumber>
    </alternativeName>
    <alternativeName>
        <fullName evidence="1">Lysophosphatidic acid synthase</fullName>
        <shortName evidence="1">LPA synthase</shortName>
    </alternativeName>
</protein>
<comment type="function">
    <text evidence="1">Catalyzes the transfer of an acyl group from acyl-ACP to glycerol-3-phosphate (G3P) to form lysophosphatidic acid (LPA). This enzyme can also utilize acyl-CoA as fatty acyl donor, but not acyl-PO(4).</text>
</comment>
<comment type="catalytic activity">
    <reaction evidence="1">
        <text>sn-glycerol 3-phosphate + an acyl-CoA = a 1-acyl-sn-glycero-3-phosphate + CoA</text>
        <dbReference type="Rhea" id="RHEA:15325"/>
        <dbReference type="ChEBI" id="CHEBI:57287"/>
        <dbReference type="ChEBI" id="CHEBI:57597"/>
        <dbReference type="ChEBI" id="CHEBI:57970"/>
        <dbReference type="ChEBI" id="CHEBI:58342"/>
        <dbReference type="EC" id="2.3.1.15"/>
    </reaction>
</comment>
<comment type="catalytic activity">
    <reaction evidence="1">
        <text>a fatty acyl-[ACP] + sn-glycerol 3-phosphate = a 1-acyl-sn-glycero-3-phosphate + holo-[ACP]</text>
        <dbReference type="Rhea" id="RHEA:42300"/>
        <dbReference type="Rhea" id="RHEA-COMP:9685"/>
        <dbReference type="Rhea" id="RHEA-COMP:14125"/>
        <dbReference type="ChEBI" id="CHEBI:57597"/>
        <dbReference type="ChEBI" id="CHEBI:57970"/>
        <dbReference type="ChEBI" id="CHEBI:64479"/>
        <dbReference type="ChEBI" id="CHEBI:138651"/>
        <dbReference type="EC" id="2.3.1.n5"/>
    </reaction>
</comment>
<comment type="pathway">
    <text evidence="1">Lipid metabolism; phospholipid metabolism.</text>
</comment>
<comment type="subunit">
    <text evidence="1">Probably interacts with PlsX.</text>
</comment>
<comment type="subcellular location">
    <subcellularLocation>
        <location evidence="1">Cell inner membrane</location>
        <topology evidence="1">Multi-pass membrane protein</topology>
    </subcellularLocation>
</comment>
<comment type="similarity">
    <text evidence="1">Belongs to the PlsY family.</text>
</comment>
<organism>
    <name type="scientific">Shigella flexneri serotype 5b (strain 8401)</name>
    <dbReference type="NCBI Taxonomy" id="373384"/>
    <lineage>
        <taxon>Bacteria</taxon>
        <taxon>Pseudomonadati</taxon>
        <taxon>Pseudomonadota</taxon>
        <taxon>Gammaproteobacteria</taxon>
        <taxon>Enterobacterales</taxon>
        <taxon>Enterobacteriaceae</taxon>
        <taxon>Shigella</taxon>
    </lineage>
</organism>
<accession>Q0T0K4</accession>
<name>PLSY_SHIF8</name>
<keyword id="KW-0997">Cell inner membrane</keyword>
<keyword id="KW-1003">Cell membrane</keyword>
<keyword id="KW-0444">Lipid biosynthesis</keyword>
<keyword id="KW-0443">Lipid metabolism</keyword>
<keyword id="KW-0472">Membrane</keyword>
<keyword id="KW-0594">Phospholipid biosynthesis</keyword>
<keyword id="KW-1208">Phospholipid metabolism</keyword>
<keyword id="KW-0808">Transferase</keyword>
<keyword id="KW-0812">Transmembrane</keyword>
<keyword id="KW-1133">Transmembrane helix</keyword>
<gene>
    <name evidence="1" type="primary">plsY</name>
    <name type="synonym">ygiH</name>
    <name type="ordered locus">SFV_3099</name>
</gene>
<dbReference type="EC" id="2.3.1.15" evidence="1"/>
<dbReference type="EC" id="2.3.1.n5" evidence="1"/>
<dbReference type="EMBL" id="CP000266">
    <property type="protein sequence ID" value="ABF05161.1"/>
    <property type="molecule type" value="Genomic_DNA"/>
</dbReference>
<dbReference type="RefSeq" id="WP_001272798.1">
    <property type="nucleotide sequence ID" value="NC_008258.1"/>
</dbReference>
<dbReference type="SMR" id="Q0T0K4"/>
<dbReference type="KEGG" id="sfv:SFV_3099"/>
<dbReference type="HOGENOM" id="CLU_081254_0_2_6"/>
<dbReference type="UniPathway" id="UPA00085"/>
<dbReference type="Proteomes" id="UP000000659">
    <property type="component" value="Chromosome"/>
</dbReference>
<dbReference type="GO" id="GO:0005886">
    <property type="term" value="C:plasma membrane"/>
    <property type="evidence" value="ECO:0007669"/>
    <property type="project" value="UniProtKB-SubCell"/>
</dbReference>
<dbReference type="GO" id="GO:0043772">
    <property type="term" value="F:acyl-phosphate glycerol-3-phosphate acyltransferase activity"/>
    <property type="evidence" value="ECO:0007669"/>
    <property type="project" value="InterPro"/>
</dbReference>
<dbReference type="GO" id="GO:0004366">
    <property type="term" value="F:glycerol-3-phosphate O-acyltransferase activity"/>
    <property type="evidence" value="ECO:0007669"/>
    <property type="project" value="UniProtKB-UniRule"/>
</dbReference>
<dbReference type="GO" id="GO:0008654">
    <property type="term" value="P:phospholipid biosynthetic process"/>
    <property type="evidence" value="ECO:0007669"/>
    <property type="project" value="UniProtKB-UniRule"/>
</dbReference>
<dbReference type="HAMAP" id="MF_01043">
    <property type="entry name" value="PlsY"/>
    <property type="match status" value="1"/>
</dbReference>
<dbReference type="InterPro" id="IPR003811">
    <property type="entry name" value="G3P_acylTferase_PlsY"/>
</dbReference>
<dbReference type="NCBIfam" id="TIGR00023">
    <property type="entry name" value="glycerol-3-phosphate 1-O-acyltransferase PlsY"/>
    <property type="match status" value="1"/>
</dbReference>
<dbReference type="PANTHER" id="PTHR30309:SF0">
    <property type="entry name" value="GLYCEROL-3-PHOSPHATE ACYLTRANSFERASE-RELATED"/>
    <property type="match status" value="1"/>
</dbReference>
<dbReference type="PANTHER" id="PTHR30309">
    <property type="entry name" value="INNER MEMBRANE PROTEIN YGIH"/>
    <property type="match status" value="1"/>
</dbReference>
<dbReference type="Pfam" id="PF02660">
    <property type="entry name" value="G3P_acyltransf"/>
    <property type="match status" value="1"/>
</dbReference>
<dbReference type="SMART" id="SM01207">
    <property type="entry name" value="G3P_acyltransf"/>
    <property type="match status" value="1"/>
</dbReference>
<proteinExistence type="inferred from homology"/>
<sequence length="205" mass="22223">MSAIAPGMILIAYLCGSISSAILVCRLCGLPDPRTSGSGNPGATNVLRIGGKGAAVAVLIFDVLKGMLPVWGAYELGVSPFWLGLIAIAACLGHIWPVFFGFKGGKGVATAFGAIAPISWDLTGVMAGTWLLTVLLSGYSSLGAIVSALIAPFYVWWFKPQFTFPVSMLSCLILLRHHDNIQRLWRRQETKIWTKFKRKREKDPE</sequence>
<evidence type="ECO:0000255" key="1">
    <source>
        <dbReference type="HAMAP-Rule" id="MF_01043"/>
    </source>
</evidence>